<accession>B6JIX8</accession>
<accession>F8BZT1</accession>
<sequence length="337" mass="35601">MREPRFWYGPVSLGSVLLAPIAACYGAVAAARLAREGTRAGCPVICIGNYHVGGAGKTPTTLRLVEILREIGETPVVVSRGYGGTLAGPVRVNETHRAADVGDEPKMMARHVPVIVARDRVEGAELARREGASVVLLDDGFQNPALAKDAAVIVIDAARGLGNRMIFPAGPLRAPLAPQVARTNALIVIGEGHAADDIAQGVVQRGGLVVRAAFVPEESSLARLRGARVLAFAGIGDPGRFFATLAKHGVELASRKEFADHHPFTEAELKALADEAQAGGLTLVTTEKDLARIEGDPALAAYAAQIVPFAVTLRVEDEGALLDFLKARMRRARQARQ</sequence>
<protein>
    <recommendedName>
        <fullName evidence="1">Tetraacyldisaccharide 4'-kinase</fullName>
        <ecNumber evidence="1">2.7.1.130</ecNumber>
    </recommendedName>
    <alternativeName>
        <fullName evidence="1">Lipid A 4'-kinase</fullName>
    </alternativeName>
</protein>
<proteinExistence type="inferred from homology"/>
<name>LPXK_AFIC5</name>
<gene>
    <name evidence="1" type="primary">lpxK</name>
    <name type="ordered locus">OCAR_7251</name>
    <name type="ordered locus">OCA5_c08640</name>
</gene>
<reference key="1">
    <citation type="journal article" date="2008" name="J. Bacteriol.">
        <title>Genome sequence of the chemolithoautotrophic bacterium Oligotropha carboxidovorans OM5T.</title>
        <authorList>
            <person name="Paul D."/>
            <person name="Bridges S."/>
            <person name="Burgess S.C."/>
            <person name="Dandass Y."/>
            <person name="Lawrence M.L."/>
        </authorList>
    </citation>
    <scope>NUCLEOTIDE SEQUENCE [LARGE SCALE GENOMIC DNA]</scope>
    <source>
        <strain>ATCC 49405 / DSM 1227 / KCTC 32145 / OM5</strain>
    </source>
</reference>
<reference key="2">
    <citation type="journal article" date="2011" name="J. Bacteriol.">
        <title>Complete genome sequences of the chemolithoautotrophic Oligotropha carboxidovorans strains OM4 and OM5.</title>
        <authorList>
            <person name="Volland S."/>
            <person name="Rachinger M."/>
            <person name="Strittmatter A."/>
            <person name="Daniel R."/>
            <person name="Gottschalk G."/>
            <person name="Meyer O."/>
        </authorList>
    </citation>
    <scope>NUCLEOTIDE SEQUENCE [LARGE SCALE GENOMIC DNA]</scope>
    <source>
        <strain>ATCC 49405 / DSM 1227 / KCTC 32145 / OM5</strain>
    </source>
</reference>
<evidence type="ECO:0000255" key="1">
    <source>
        <dbReference type="HAMAP-Rule" id="MF_00409"/>
    </source>
</evidence>
<feature type="chain" id="PRO_1000123724" description="Tetraacyldisaccharide 4'-kinase">
    <location>
        <begin position="1"/>
        <end position="337"/>
    </location>
</feature>
<feature type="binding site" evidence="1">
    <location>
        <begin position="51"/>
        <end position="58"/>
    </location>
    <ligand>
        <name>ATP</name>
        <dbReference type="ChEBI" id="CHEBI:30616"/>
    </ligand>
</feature>
<keyword id="KW-0067">ATP-binding</keyword>
<keyword id="KW-0418">Kinase</keyword>
<keyword id="KW-0441">Lipid A biosynthesis</keyword>
<keyword id="KW-0444">Lipid biosynthesis</keyword>
<keyword id="KW-0443">Lipid metabolism</keyword>
<keyword id="KW-0547">Nucleotide-binding</keyword>
<keyword id="KW-1185">Reference proteome</keyword>
<keyword id="KW-0808">Transferase</keyword>
<organism>
    <name type="scientific">Afipia carboxidovorans (strain ATCC 49405 / DSM 1227 / KCTC 32145 / OM5)</name>
    <name type="common">Oligotropha carboxidovorans</name>
    <dbReference type="NCBI Taxonomy" id="504832"/>
    <lineage>
        <taxon>Bacteria</taxon>
        <taxon>Pseudomonadati</taxon>
        <taxon>Pseudomonadota</taxon>
        <taxon>Alphaproteobacteria</taxon>
        <taxon>Hyphomicrobiales</taxon>
        <taxon>Nitrobacteraceae</taxon>
        <taxon>Afipia</taxon>
    </lineage>
</organism>
<comment type="function">
    <text evidence="1">Transfers the gamma-phosphate of ATP to the 4'-position of a tetraacyldisaccharide 1-phosphate intermediate (termed DS-1-P) to form tetraacyldisaccharide 1,4'-bis-phosphate (lipid IVA).</text>
</comment>
<comment type="catalytic activity">
    <reaction evidence="1">
        <text>a lipid A disaccharide + ATP = a lipid IVA + ADP + H(+)</text>
        <dbReference type="Rhea" id="RHEA:67840"/>
        <dbReference type="ChEBI" id="CHEBI:15378"/>
        <dbReference type="ChEBI" id="CHEBI:30616"/>
        <dbReference type="ChEBI" id="CHEBI:176343"/>
        <dbReference type="ChEBI" id="CHEBI:176425"/>
        <dbReference type="ChEBI" id="CHEBI:456216"/>
        <dbReference type="EC" id="2.7.1.130"/>
    </reaction>
</comment>
<comment type="pathway">
    <text evidence="1">Glycolipid biosynthesis; lipid IV(A) biosynthesis; lipid IV(A) from (3R)-3-hydroxytetradecanoyl-[acyl-carrier-protein] and UDP-N-acetyl-alpha-D-glucosamine: step 6/6.</text>
</comment>
<comment type="similarity">
    <text evidence="1">Belongs to the LpxK family.</text>
</comment>
<dbReference type="EC" id="2.7.1.130" evidence="1"/>
<dbReference type="EMBL" id="CP001196">
    <property type="protein sequence ID" value="ACI94355.1"/>
    <property type="molecule type" value="Genomic_DNA"/>
</dbReference>
<dbReference type="EMBL" id="CP002826">
    <property type="protein sequence ID" value="AEI05586.1"/>
    <property type="molecule type" value="Genomic_DNA"/>
</dbReference>
<dbReference type="RefSeq" id="WP_012564381.1">
    <property type="nucleotide sequence ID" value="NC_015684.1"/>
</dbReference>
<dbReference type="SMR" id="B6JIX8"/>
<dbReference type="STRING" id="504832.OCA5_c08640"/>
<dbReference type="KEGG" id="oca:OCAR_7251"/>
<dbReference type="KEGG" id="ocg:OCA5_c08640"/>
<dbReference type="PATRIC" id="fig|504832.7.peg.911"/>
<dbReference type="eggNOG" id="COG1663">
    <property type="taxonomic scope" value="Bacteria"/>
</dbReference>
<dbReference type="HOGENOM" id="CLU_038816_0_0_5"/>
<dbReference type="OrthoDB" id="9766423at2"/>
<dbReference type="UniPathway" id="UPA00359">
    <property type="reaction ID" value="UER00482"/>
</dbReference>
<dbReference type="Proteomes" id="UP000007730">
    <property type="component" value="Chromosome"/>
</dbReference>
<dbReference type="GO" id="GO:0005886">
    <property type="term" value="C:plasma membrane"/>
    <property type="evidence" value="ECO:0007669"/>
    <property type="project" value="TreeGrafter"/>
</dbReference>
<dbReference type="GO" id="GO:0005524">
    <property type="term" value="F:ATP binding"/>
    <property type="evidence" value="ECO:0007669"/>
    <property type="project" value="UniProtKB-UniRule"/>
</dbReference>
<dbReference type="GO" id="GO:0009029">
    <property type="term" value="F:tetraacyldisaccharide 4'-kinase activity"/>
    <property type="evidence" value="ECO:0007669"/>
    <property type="project" value="UniProtKB-UniRule"/>
</dbReference>
<dbReference type="GO" id="GO:0009245">
    <property type="term" value="P:lipid A biosynthetic process"/>
    <property type="evidence" value="ECO:0007669"/>
    <property type="project" value="UniProtKB-UniRule"/>
</dbReference>
<dbReference type="GO" id="GO:0009244">
    <property type="term" value="P:lipopolysaccharide core region biosynthetic process"/>
    <property type="evidence" value="ECO:0007669"/>
    <property type="project" value="TreeGrafter"/>
</dbReference>
<dbReference type="HAMAP" id="MF_00409">
    <property type="entry name" value="LpxK"/>
    <property type="match status" value="1"/>
</dbReference>
<dbReference type="InterPro" id="IPR003758">
    <property type="entry name" value="LpxK"/>
</dbReference>
<dbReference type="InterPro" id="IPR027417">
    <property type="entry name" value="P-loop_NTPase"/>
</dbReference>
<dbReference type="NCBIfam" id="TIGR00682">
    <property type="entry name" value="lpxK"/>
    <property type="match status" value="1"/>
</dbReference>
<dbReference type="PANTHER" id="PTHR42724">
    <property type="entry name" value="TETRAACYLDISACCHARIDE 4'-KINASE"/>
    <property type="match status" value="1"/>
</dbReference>
<dbReference type="PANTHER" id="PTHR42724:SF1">
    <property type="entry name" value="TETRAACYLDISACCHARIDE 4'-KINASE, MITOCHONDRIAL-RELATED"/>
    <property type="match status" value="1"/>
</dbReference>
<dbReference type="Pfam" id="PF02606">
    <property type="entry name" value="LpxK"/>
    <property type="match status" value="1"/>
</dbReference>
<dbReference type="SUPFAM" id="SSF52540">
    <property type="entry name" value="P-loop containing nucleoside triphosphate hydrolases"/>
    <property type="match status" value="1"/>
</dbReference>